<protein>
    <recommendedName>
        <fullName evidence="1">tRNA modification GTPase MnmE</fullName>
        <ecNumber evidence="1">3.6.-.-</ecNumber>
    </recommendedName>
</protein>
<proteinExistence type="inferred from homology"/>
<accession>Q6MUE7</accession>
<reference key="1">
    <citation type="journal article" date="2004" name="Genome Res.">
        <title>The genome sequence of Mycoplasma mycoides subsp. mycoides SC type strain PG1T, the causative agent of contagious bovine pleuropneumonia (CBPP).</title>
        <authorList>
            <person name="Westberg J."/>
            <person name="Persson A."/>
            <person name="Holmberg A."/>
            <person name="Goesmann A."/>
            <person name="Lundeberg J."/>
            <person name="Johansson K.-E."/>
            <person name="Pettersson B."/>
            <person name="Uhlen M."/>
        </authorList>
    </citation>
    <scope>NUCLEOTIDE SEQUENCE [LARGE SCALE GENOMIC DNA]</scope>
    <source>
        <strain>CCUG 32753 / NCTC 10114 / PG1</strain>
    </source>
</reference>
<name>MNME_MYCMS</name>
<organism>
    <name type="scientific">Mycoplasma mycoides subsp. mycoides SC (strain CCUG 32753 / NCTC 10114 / PG1)</name>
    <dbReference type="NCBI Taxonomy" id="272632"/>
    <lineage>
        <taxon>Bacteria</taxon>
        <taxon>Bacillati</taxon>
        <taxon>Mycoplasmatota</taxon>
        <taxon>Mollicutes</taxon>
        <taxon>Mycoplasmataceae</taxon>
        <taxon>Mycoplasma</taxon>
    </lineage>
</organism>
<feature type="chain" id="PRO_0000345843" description="tRNA modification GTPase MnmE">
    <location>
        <begin position="1"/>
        <end position="452"/>
    </location>
</feature>
<feature type="domain" description="TrmE-type G">
    <location>
        <begin position="217"/>
        <end position="373"/>
    </location>
</feature>
<feature type="binding site" evidence="1">
    <location>
        <position position="23"/>
    </location>
    <ligand>
        <name>(6S)-5-formyl-5,6,7,8-tetrahydrofolate</name>
        <dbReference type="ChEBI" id="CHEBI:57457"/>
    </ligand>
</feature>
<feature type="binding site" evidence="1">
    <location>
        <position position="81"/>
    </location>
    <ligand>
        <name>(6S)-5-formyl-5,6,7,8-tetrahydrofolate</name>
        <dbReference type="ChEBI" id="CHEBI:57457"/>
    </ligand>
</feature>
<feature type="binding site" evidence="1">
    <location>
        <position position="120"/>
    </location>
    <ligand>
        <name>(6S)-5-formyl-5,6,7,8-tetrahydrofolate</name>
        <dbReference type="ChEBI" id="CHEBI:57457"/>
    </ligand>
</feature>
<feature type="binding site" evidence="1">
    <location>
        <begin position="227"/>
        <end position="232"/>
    </location>
    <ligand>
        <name>GTP</name>
        <dbReference type="ChEBI" id="CHEBI:37565"/>
    </ligand>
</feature>
<feature type="binding site" evidence="1">
    <location>
        <position position="227"/>
    </location>
    <ligand>
        <name>K(+)</name>
        <dbReference type="ChEBI" id="CHEBI:29103"/>
    </ligand>
</feature>
<feature type="binding site" evidence="1">
    <location>
        <position position="231"/>
    </location>
    <ligand>
        <name>Mg(2+)</name>
        <dbReference type="ChEBI" id="CHEBI:18420"/>
    </ligand>
</feature>
<feature type="binding site" evidence="1">
    <location>
        <begin position="246"/>
        <end position="252"/>
    </location>
    <ligand>
        <name>GTP</name>
        <dbReference type="ChEBI" id="CHEBI:37565"/>
    </ligand>
</feature>
<feature type="binding site" evidence="1">
    <location>
        <position position="246"/>
    </location>
    <ligand>
        <name>K(+)</name>
        <dbReference type="ChEBI" id="CHEBI:29103"/>
    </ligand>
</feature>
<feature type="binding site" evidence="1">
    <location>
        <position position="248"/>
    </location>
    <ligand>
        <name>K(+)</name>
        <dbReference type="ChEBI" id="CHEBI:29103"/>
    </ligand>
</feature>
<feature type="binding site" evidence="1">
    <location>
        <position position="251"/>
    </location>
    <ligand>
        <name>K(+)</name>
        <dbReference type="ChEBI" id="CHEBI:29103"/>
    </ligand>
</feature>
<feature type="binding site" evidence="1">
    <location>
        <position position="252"/>
    </location>
    <ligand>
        <name>Mg(2+)</name>
        <dbReference type="ChEBI" id="CHEBI:18420"/>
    </ligand>
</feature>
<feature type="binding site" evidence="1">
    <location>
        <begin position="271"/>
        <end position="274"/>
    </location>
    <ligand>
        <name>GTP</name>
        <dbReference type="ChEBI" id="CHEBI:37565"/>
    </ligand>
</feature>
<feature type="binding site" evidence="1">
    <location>
        <position position="452"/>
    </location>
    <ligand>
        <name>(6S)-5-formyl-5,6,7,8-tetrahydrofolate</name>
        <dbReference type="ChEBI" id="CHEBI:57457"/>
    </ligand>
</feature>
<dbReference type="EC" id="3.6.-.-" evidence="1"/>
<dbReference type="EMBL" id="BX293980">
    <property type="protein sequence ID" value="CAE76737.1"/>
    <property type="molecule type" value="Genomic_DNA"/>
</dbReference>
<dbReference type="RefSeq" id="NP_975095.1">
    <property type="nucleotide sequence ID" value="NC_005364.2"/>
</dbReference>
<dbReference type="RefSeq" id="WP_011166295.1">
    <property type="nucleotide sequence ID" value="NC_005364.2"/>
</dbReference>
<dbReference type="SMR" id="Q6MUE7"/>
<dbReference type="STRING" id="272632.MSC_0085"/>
<dbReference type="KEGG" id="mmy:MSC_0085"/>
<dbReference type="PATRIC" id="fig|272632.4.peg.87"/>
<dbReference type="eggNOG" id="COG0486">
    <property type="taxonomic scope" value="Bacteria"/>
</dbReference>
<dbReference type="HOGENOM" id="CLU_019624_4_1_14"/>
<dbReference type="Proteomes" id="UP000001016">
    <property type="component" value="Chromosome"/>
</dbReference>
<dbReference type="GO" id="GO:0005829">
    <property type="term" value="C:cytosol"/>
    <property type="evidence" value="ECO:0007669"/>
    <property type="project" value="TreeGrafter"/>
</dbReference>
<dbReference type="GO" id="GO:0005525">
    <property type="term" value="F:GTP binding"/>
    <property type="evidence" value="ECO:0007669"/>
    <property type="project" value="UniProtKB-UniRule"/>
</dbReference>
<dbReference type="GO" id="GO:0003924">
    <property type="term" value="F:GTPase activity"/>
    <property type="evidence" value="ECO:0007669"/>
    <property type="project" value="UniProtKB-UniRule"/>
</dbReference>
<dbReference type="GO" id="GO:0046872">
    <property type="term" value="F:metal ion binding"/>
    <property type="evidence" value="ECO:0007669"/>
    <property type="project" value="UniProtKB-KW"/>
</dbReference>
<dbReference type="GO" id="GO:0030488">
    <property type="term" value="P:tRNA methylation"/>
    <property type="evidence" value="ECO:0007669"/>
    <property type="project" value="TreeGrafter"/>
</dbReference>
<dbReference type="GO" id="GO:0002098">
    <property type="term" value="P:tRNA wobble uridine modification"/>
    <property type="evidence" value="ECO:0007669"/>
    <property type="project" value="TreeGrafter"/>
</dbReference>
<dbReference type="CDD" id="cd04164">
    <property type="entry name" value="trmE"/>
    <property type="match status" value="1"/>
</dbReference>
<dbReference type="CDD" id="cd14858">
    <property type="entry name" value="TrmE_N"/>
    <property type="match status" value="1"/>
</dbReference>
<dbReference type="Gene3D" id="3.40.50.300">
    <property type="entry name" value="P-loop containing nucleotide triphosphate hydrolases"/>
    <property type="match status" value="1"/>
</dbReference>
<dbReference type="Gene3D" id="3.30.1360.120">
    <property type="entry name" value="Probable tRNA modification gtpase trme, domain 1"/>
    <property type="match status" value="1"/>
</dbReference>
<dbReference type="Gene3D" id="1.20.120.430">
    <property type="entry name" value="tRNA modification GTPase MnmE domain 2"/>
    <property type="match status" value="1"/>
</dbReference>
<dbReference type="HAMAP" id="MF_00379">
    <property type="entry name" value="GTPase_MnmE"/>
    <property type="match status" value="1"/>
</dbReference>
<dbReference type="InterPro" id="IPR031168">
    <property type="entry name" value="G_TrmE"/>
</dbReference>
<dbReference type="InterPro" id="IPR006073">
    <property type="entry name" value="GTP-bd"/>
</dbReference>
<dbReference type="InterPro" id="IPR018948">
    <property type="entry name" value="GTP-bd_TrmE_N"/>
</dbReference>
<dbReference type="InterPro" id="IPR004520">
    <property type="entry name" value="GTPase_MnmE"/>
</dbReference>
<dbReference type="InterPro" id="IPR027368">
    <property type="entry name" value="MnmE_dom2"/>
</dbReference>
<dbReference type="InterPro" id="IPR025867">
    <property type="entry name" value="MnmE_helical"/>
</dbReference>
<dbReference type="InterPro" id="IPR027417">
    <property type="entry name" value="P-loop_NTPase"/>
</dbReference>
<dbReference type="InterPro" id="IPR005225">
    <property type="entry name" value="Small_GTP-bd"/>
</dbReference>
<dbReference type="InterPro" id="IPR027266">
    <property type="entry name" value="TrmE/GcvT_dom1"/>
</dbReference>
<dbReference type="NCBIfam" id="TIGR00450">
    <property type="entry name" value="mnmE_trmE_thdF"/>
    <property type="match status" value="1"/>
</dbReference>
<dbReference type="NCBIfam" id="TIGR00231">
    <property type="entry name" value="small_GTP"/>
    <property type="match status" value="1"/>
</dbReference>
<dbReference type="PANTHER" id="PTHR42714">
    <property type="entry name" value="TRNA MODIFICATION GTPASE GTPBP3"/>
    <property type="match status" value="1"/>
</dbReference>
<dbReference type="PANTHER" id="PTHR42714:SF2">
    <property type="entry name" value="TRNA MODIFICATION GTPASE GTPBP3, MITOCHONDRIAL"/>
    <property type="match status" value="1"/>
</dbReference>
<dbReference type="Pfam" id="PF01926">
    <property type="entry name" value="MMR_HSR1"/>
    <property type="match status" value="1"/>
</dbReference>
<dbReference type="Pfam" id="PF12631">
    <property type="entry name" value="MnmE_helical"/>
    <property type="match status" value="1"/>
</dbReference>
<dbReference type="Pfam" id="PF10396">
    <property type="entry name" value="TrmE_N"/>
    <property type="match status" value="1"/>
</dbReference>
<dbReference type="PRINTS" id="PR00449">
    <property type="entry name" value="RASTRNSFRMNG"/>
</dbReference>
<dbReference type="SUPFAM" id="SSF52540">
    <property type="entry name" value="P-loop containing nucleoside triphosphate hydrolases"/>
    <property type="match status" value="1"/>
</dbReference>
<dbReference type="PROSITE" id="PS51709">
    <property type="entry name" value="G_TRME"/>
    <property type="match status" value="1"/>
</dbReference>
<sequence length="452" mass="50538">MLINDTVVAPATNISTQAIALIRVSGSEAFLIVNKLIKDKKLEEKRGLFLRKLYFEDELIDEVVLSCFVAPNSFTGENVVEIACHGGILNTNKIINILIQSGARMALRGEFSQRSFLNGKIDLIQAEGINNLIHAKNELALKIGVANMSGSNNKAIIELKDNLLDIISRIQVSIDYPDYDDVEGSSIEDLTNLLEIINDQINKLLMRSKMAFKNSEGIKTAIIGQTNVGKSSILNALINEDKAIVTDIPGTTRDIVEGQINLENVSLNLIDTAGIRKTSDVVENLGILKSKNLINEADLVLFVVNKENINDLDNQEIFELLKNKTYILIVNKAEKLSKTEKQNLEKKYQNIVFTSAINHDIDQLVLRINQMYLNEEINKNDELILIGLNQITLVEQIKNKLSTALSIIKSGMPIDIVNVDLYDAWNLLNELIGVEYEDEIIDNIFRKYCLGK</sequence>
<keyword id="KW-0963">Cytoplasm</keyword>
<keyword id="KW-0342">GTP-binding</keyword>
<keyword id="KW-0378">Hydrolase</keyword>
<keyword id="KW-0460">Magnesium</keyword>
<keyword id="KW-0479">Metal-binding</keyword>
<keyword id="KW-0547">Nucleotide-binding</keyword>
<keyword id="KW-0630">Potassium</keyword>
<keyword id="KW-1185">Reference proteome</keyword>
<keyword id="KW-0819">tRNA processing</keyword>
<evidence type="ECO:0000255" key="1">
    <source>
        <dbReference type="HAMAP-Rule" id="MF_00379"/>
    </source>
</evidence>
<comment type="function">
    <text evidence="1">Exhibits a very high intrinsic GTPase hydrolysis rate. Involved in the addition of a carboxymethylaminomethyl (cmnm) group at the wobble position (U34) of certain tRNAs, forming tRNA-cmnm(5)s(2)U34.</text>
</comment>
<comment type="cofactor">
    <cofactor evidence="1">
        <name>K(+)</name>
        <dbReference type="ChEBI" id="CHEBI:29103"/>
    </cofactor>
    <text evidence="1">Binds 1 potassium ion per subunit.</text>
</comment>
<comment type="subunit">
    <text evidence="1">Homodimer. Heterotetramer of two MnmE and two MnmG subunits.</text>
</comment>
<comment type="subcellular location">
    <subcellularLocation>
        <location evidence="1">Cytoplasm</location>
    </subcellularLocation>
</comment>
<comment type="similarity">
    <text evidence="1">Belongs to the TRAFAC class TrmE-Era-EngA-EngB-Septin-like GTPase superfamily. TrmE GTPase family.</text>
</comment>
<gene>
    <name evidence="1" type="primary">mnmE</name>
    <name evidence="1" type="synonym">trmE</name>
    <name type="ordered locus">MSC_0085</name>
</gene>